<sequence>MAIANKNIIFVAGLGGIGLDTSREIVKSGPKNLVILDRIDNPTAIAELKAINPKVTVTFYPYDVTVPVAETTKLLKTIFAQLKTVDLLINGAGILDDHQIERTIAVNFTGTVNTTTAIMEFWDKRKGGPGGVIANICSVTGFNAIYQVPVYSASKAAALSFTNSLARLAPITGVTAYSINPGITRTPLVHKFNSWLDVEPRVGELLLEHPTQTTLECAQNFVKAIEANKNGAIWQLDLGQLIAVEWTKHWDSHI</sequence>
<evidence type="ECO:0000250" key="1"/>
<evidence type="ECO:0000255" key="2">
    <source>
        <dbReference type="PROSITE-ProRule" id="PRU10001"/>
    </source>
</evidence>
<evidence type="ECO:0000305" key="3"/>
<comment type="catalytic activity">
    <reaction evidence="2">
        <text>a primary alcohol + NAD(+) = an aldehyde + NADH + H(+)</text>
        <dbReference type="Rhea" id="RHEA:10736"/>
        <dbReference type="ChEBI" id="CHEBI:15378"/>
        <dbReference type="ChEBI" id="CHEBI:15734"/>
        <dbReference type="ChEBI" id="CHEBI:17478"/>
        <dbReference type="ChEBI" id="CHEBI:57540"/>
        <dbReference type="ChEBI" id="CHEBI:57945"/>
        <dbReference type="EC" id="1.1.1.1"/>
    </reaction>
</comment>
<comment type="catalytic activity">
    <reaction evidence="2">
        <text>a secondary alcohol + NAD(+) = a ketone + NADH + H(+)</text>
        <dbReference type="Rhea" id="RHEA:10740"/>
        <dbReference type="ChEBI" id="CHEBI:15378"/>
        <dbReference type="ChEBI" id="CHEBI:17087"/>
        <dbReference type="ChEBI" id="CHEBI:35681"/>
        <dbReference type="ChEBI" id="CHEBI:57540"/>
        <dbReference type="ChEBI" id="CHEBI:57945"/>
        <dbReference type="EC" id="1.1.1.1"/>
    </reaction>
</comment>
<comment type="subunit">
    <text>Homodimer.</text>
</comment>
<comment type="similarity">
    <text evidence="3">Belongs to the short-chain dehydrogenases/reductases (SDR) family.</text>
</comment>
<gene>
    <name type="primary">Adh2</name>
</gene>
<accession>P48587</accession>
<name>ADH2_DROMN</name>
<organism>
    <name type="scientific">Drosophila montana</name>
    <name type="common">Fruit fly</name>
    <dbReference type="NCBI Taxonomy" id="40370"/>
    <lineage>
        <taxon>Eukaryota</taxon>
        <taxon>Metazoa</taxon>
        <taxon>Ecdysozoa</taxon>
        <taxon>Arthropoda</taxon>
        <taxon>Hexapoda</taxon>
        <taxon>Insecta</taxon>
        <taxon>Pterygota</taxon>
        <taxon>Neoptera</taxon>
        <taxon>Endopterygota</taxon>
        <taxon>Diptera</taxon>
        <taxon>Brachycera</taxon>
        <taxon>Muscomorpha</taxon>
        <taxon>Ephydroidea</taxon>
        <taxon>Drosophilidae</taxon>
        <taxon>Drosophila</taxon>
    </lineage>
</organism>
<protein>
    <recommendedName>
        <fullName>Alcohol dehydrogenase 2</fullName>
        <ecNumber>1.1.1.1</ecNumber>
    </recommendedName>
</protein>
<proteinExistence type="inferred from homology"/>
<feature type="initiator methionine" description="Removed" evidence="1">
    <location>
        <position position="1"/>
    </location>
</feature>
<feature type="chain" id="PRO_0000054477" description="Alcohol dehydrogenase 2">
    <location>
        <begin position="2"/>
        <end position="254"/>
    </location>
</feature>
<feature type="active site" description="Proton acceptor" evidence="2">
    <location>
        <position position="151"/>
    </location>
</feature>
<feature type="binding site" evidence="1">
    <location>
        <begin position="10"/>
        <end position="33"/>
    </location>
    <ligand>
        <name>NAD(+)</name>
        <dbReference type="ChEBI" id="CHEBI:57540"/>
    </ligand>
</feature>
<feature type="binding site" evidence="1">
    <location>
        <position position="138"/>
    </location>
    <ligand>
        <name>substrate</name>
    </ligand>
</feature>
<reference key="1">
    <citation type="journal article" date="1996" name="Mol. Biol. Evol.">
        <title>Molecular phylogeny and genome evolution in the Drosophila virilis species group: duplications of the alcohol dehydrogenase gene.</title>
        <authorList>
            <person name="Nurminsky D.I."/>
            <person name="Moriyama E.N."/>
            <person name="Lozovskaya E.R."/>
            <person name="Hartl D.L."/>
        </authorList>
    </citation>
    <scope>NUCLEOTIDE SEQUENCE [GENOMIC DNA]</scope>
</reference>
<dbReference type="EC" id="1.1.1.1"/>
<dbReference type="EMBL" id="U26845">
    <property type="protein sequence ID" value="AAB02631.1"/>
    <property type="molecule type" value="Genomic_DNA"/>
</dbReference>
<dbReference type="SMR" id="P48587"/>
<dbReference type="GO" id="GO:0005737">
    <property type="term" value="C:cytoplasm"/>
    <property type="evidence" value="ECO:0007669"/>
    <property type="project" value="TreeGrafter"/>
</dbReference>
<dbReference type="GO" id="GO:0004022">
    <property type="term" value="F:alcohol dehydrogenase (NAD+) activity"/>
    <property type="evidence" value="ECO:0007669"/>
    <property type="project" value="UniProtKB-EC"/>
</dbReference>
<dbReference type="GO" id="GO:0006066">
    <property type="term" value="P:alcohol metabolic process"/>
    <property type="evidence" value="ECO:0007669"/>
    <property type="project" value="InterPro"/>
</dbReference>
<dbReference type="CDD" id="cd05323">
    <property type="entry name" value="ADH_SDR_c_like"/>
    <property type="match status" value="1"/>
</dbReference>
<dbReference type="FunFam" id="3.40.50.720:FF:000302">
    <property type="entry name" value="Alcohol dehydrogenase"/>
    <property type="match status" value="1"/>
</dbReference>
<dbReference type="Gene3D" id="3.40.50.720">
    <property type="entry name" value="NAD(P)-binding Rossmann-like Domain"/>
    <property type="match status" value="1"/>
</dbReference>
<dbReference type="InterPro" id="IPR002425">
    <property type="entry name" value="ADH_Drosophila-type"/>
</dbReference>
<dbReference type="InterPro" id="IPR036291">
    <property type="entry name" value="NAD(P)-bd_dom_sf"/>
</dbReference>
<dbReference type="InterPro" id="IPR020904">
    <property type="entry name" value="Sc_DH/Rdtase_CS"/>
</dbReference>
<dbReference type="InterPro" id="IPR002347">
    <property type="entry name" value="SDR_fam"/>
</dbReference>
<dbReference type="PANTHER" id="PTHR44229">
    <property type="entry name" value="15-HYDROXYPROSTAGLANDIN DEHYDROGENASE [NAD(+)]"/>
    <property type="match status" value="1"/>
</dbReference>
<dbReference type="PANTHER" id="PTHR44229:SF8">
    <property type="entry name" value="ALCOHOL DEHYDROGENASE-RELATED"/>
    <property type="match status" value="1"/>
</dbReference>
<dbReference type="Pfam" id="PF00106">
    <property type="entry name" value="adh_short"/>
    <property type="match status" value="1"/>
</dbReference>
<dbReference type="PRINTS" id="PR01168">
    <property type="entry name" value="ALCDHDRGNASE"/>
</dbReference>
<dbReference type="PRINTS" id="PR01167">
    <property type="entry name" value="INSADHFAMILY"/>
</dbReference>
<dbReference type="PRINTS" id="PR00080">
    <property type="entry name" value="SDRFAMILY"/>
</dbReference>
<dbReference type="SUPFAM" id="SSF51735">
    <property type="entry name" value="NAD(P)-binding Rossmann-fold domains"/>
    <property type="match status" value="1"/>
</dbReference>
<dbReference type="PROSITE" id="PS00061">
    <property type="entry name" value="ADH_SHORT"/>
    <property type="match status" value="1"/>
</dbReference>
<keyword id="KW-0520">NAD</keyword>
<keyword id="KW-0560">Oxidoreductase</keyword>